<name>SYD_STRM5</name>
<evidence type="ECO:0000255" key="1">
    <source>
        <dbReference type="HAMAP-Rule" id="MF_00044"/>
    </source>
</evidence>
<gene>
    <name evidence="1" type="primary">aspS</name>
    <name type="ordered locus">Smal_3132</name>
</gene>
<keyword id="KW-0030">Aminoacyl-tRNA synthetase</keyword>
<keyword id="KW-0067">ATP-binding</keyword>
<keyword id="KW-0963">Cytoplasm</keyword>
<keyword id="KW-0436">Ligase</keyword>
<keyword id="KW-0547">Nucleotide-binding</keyword>
<keyword id="KW-0648">Protein biosynthesis</keyword>
<reference key="1">
    <citation type="submission" date="2008-06" db="EMBL/GenBank/DDBJ databases">
        <title>Complete sequence of Stenotrophomonas maltophilia R551-3.</title>
        <authorList>
            <consortium name="US DOE Joint Genome Institute"/>
            <person name="Lucas S."/>
            <person name="Copeland A."/>
            <person name="Lapidus A."/>
            <person name="Glavina del Rio T."/>
            <person name="Dalin E."/>
            <person name="Tice H."/>
            <person name="Pitluck S."/>
            <person name="Chain P."/>
            <person name="Malfatti S."/>
            <person name="Shin M."/>
            <person name="Vergez L."/>
            <person name="Lang D."/>
            <person name="Schmutz J."/>
            <person name="Larimer F."/>
            <person name="Land M."/>
            <person name="Hauser L."/>
            <person name="Kyrpides N."/>
            <person name="Mikhailova N."/>
            <person name="Taghavi S."/>
            <person name="Monchy S."/>
            <person name="Newman L."/>
            <person name="Vangronsveld J."/>
            <person name="van der Lelie D."/>
            <person name="Richardson P."/>
        </authorList>
    </citation>
    <scope>NUCLEOTIDE SEQUENCE [LARGE SCALE GENOMIC DNA]</scope>
    <source>
        <strain>R551-3</strain>
    </source>
</reference>
<sequence>MRTHFCGLVDETLIGQTVTLAGWTDVARNQGGVCFIDLRDHEGIVQVTVEVDNAEVFAVAASLGYEDVLQVEGVVRARHAVNDKMRTGKVEVIATAITVLNKAAPLPFHAHENPGEETRLKYRYLDLRRPEMQRMQRTRIKLVQALRRHLDEKGFQDIETPILTKATPEGARDFLVPARMHPGEFYALPQSPQLFKQILMVAGFDRYYQIARCFRDEALRADRQLEFTQLDMEFAFVRERDVQDFVEDMIRGIFKEVVNVELDASFPRMTWAEAMRRYGSDKPDLRIALELVDVAELVKNSEFPVFTGPANDADGRVAALRIPGGASLSRKQIDEYAAHAAKYGAKGLAYIKIADNGEVSSPIQKFFSEESFAALVAHVGAGNGDIVFFGAGGYNKVSDFMGALRLKAGKDFGLVADGWAPLWVTDFPMFEWDEEEQRYVALHHPFTAPAVDDIADLRANARTAVSRGYDMVLNGNEIGGGSIRIHRPDMQSAVFELLGIGAEEARAKFGFLLDALNYGAPPHGGIAFGIDRIAALMAGTESIRDVIPFPKTTGAQDLMTDAPSPIVDAQLAEVHIQVRPKTN</sequence>
<proteinExistence type="inferred from homology"/>
<comment type="function">
    <text evidence="1">Catalyzes the attachment of L-aspartate to tRNA(Asp) in a two-step reaction: L-aspartate is first activated by ATP to form Asp-AMP and then transferred to the acceptor end of tRNA(Asp).</text>
</comment>
<comment type="catalytic activity">
    <reaction evidence="1">
        <text>tRNA(Asp) + L-aspartate + ATP = L-aspartyl-tRNA(Asp) + AMP + diphosphate</text>
        <dbReference type="Rhea" id="RHEA:19649"/>
        <dbReference type="Rhea" id="RHEA-COMP:9660"/>
        <dbReference type="Rhea" id="RHEA-COMP:9678"/>
        <dbReference type="ChEBI" id="CHEBI:29991"/>
        <dbReference type="ChEBI" id="CHEBI:30616"/>
        <dbReference type="ChEBI" id="CHEBI:33019"/>
        <dbReference type="ChEBI" id="CHEBI:78442"/>
        <dbReference type="ChEBI" id="CHEBI:78516"/>
        <dbReference type="ChEBI" id="CHEBI:456215"/>
        <dbReference type="EC" id="6.1.1.12"/>
    </reaction>
</comment>
<comment type="subunit">
    <text evidence="1">Homodimer.</text>
</comment>
<comment type="subcellular location">
    <subcellularLocation>
        <location evidence="1">Cytoplasm</location>
    </subcellularLocation>
</comment>
<comment type="similarity">
    <text evidence="1">Belongs to the class-II aminoacyl-tRNA synthetase family. Type 1 subfamily.</text>
</comment>
<protein>
    <recommendedName>
        <fullName evidence="1">Aspartate--tRNA ligase</fullName>
        <ecNumber evidence="1">6.1.1.12</ecNumber>
    </recommendedName>
    <alternativeName>
        <fullName evidence="1">Aspartyl-tRNA synthetase</fullName>
        <shortName evidence="1">AspRS</shortName>
    </alternativeName>
</protein>
<organism>
    <name type="scientific">Stenotrophomonas maltophilia (strain R551-3)</name>
    <dbReference type="NCBI Taxonomy" id="391008"/>
    <lineage>
        <taxon>Bacteria</taxon>
        <taxon>Pseudomonadati</taxon>
        <taxon>Pseudomonadota</taxon>
        <taxon>Gammaproteobacteria</taxon>
        <taxon>Lysobacterales</taxon>
        <taxon>Lysobacteraceae</taxon>
        <taxon>Stenotrophomonas</taxon>
        <taxon>Stenotrophomonas maltophilia group</taxon>
    </lineage>
</organism>
<dbReference type="EC" id="6.1.1.12" evidence="1"/>
<dbReference type="EMBL" id="CP001111">
    <property type="protein sequence ID" value="ACF52831.1"/>
    <property type="molecule type" value="Genomic_DNA"/>
</dbReference>
<dbReference type="RefSeq" id="WP_012511903.1">
    <property type="nucleotide sequence ID" value="NC_011071.1"/>
</dbReference>
<dbReference type="SMR" id="B4ST40"/>
<dbReference type="STRING" id="391008.Smal_3132"/>
<dbReference type="KEGG" id="smt:Smal_3132"/>
<dbReference type="eggNOG" id="COG0173">
    <property type="taxonomic scope" value="Bacteria"/>
</dbReference>
<dbReference type="HOGENOM" id="CLU_014330_3_2_6"/>
<dbReference type="OrthoDB" id="9802326at2"/>
<dbReference type="Proteomes" id="UP000001867">
    <property type="component" value="Chromosome"/>
</dbReference>
<dbReference type="GO" id="GO:0005737">
    <property type="term" value="C:cytoplasm"/>
    <property type="evidence" value="ECO:0007669"/>
    <property type="project" value="UniProtKB-SubCell"/>
</dbReference>
<dbReference type="GO" id="GO:0004815">
    <property type="term" value="F:aspartate-tRNA ligase activity"/>
    <property type="evidence" value="ECO:0007669"/>
    <property type="project" value="UniProtKB-UniRule"/>
</dbReference>
<dbReference type="GO" id="GO:0005524">
    <property type="term" value="F:ATP binding"/>
    <property type="evidence" value="ECO:0007669"/>
    <property type="project" value="UniProtKB-UniRule"/>
</dbReference>
<dbReference type="GO" id="GO:0003676">
    <property type="term" value="F:nucleic acid binding"/>
    <property type="evidence" value="ECO:0007669"/>
    <property type="project" value="InterPro"/>
</dbReference>
<dbReference type="GO" id="GO:0006422">
    <property type="term" value="P:aspartyl-tRNA aminoacylation"/>
    <property type="evidence" value="ECO:0007669"/>
    <property type="project" value="UniProtKB-UniRule"/>
</dbReference>
<dbReference type="CDD" id="cd00777">
    <property type="entry name" value="AspRS_core"/>
    <property type="match status" value="1"/>
</dbReference>
<dbReference type="CDD" id="cd04317">
    <property type="entry name" value="EcAspRS_like_N"/>
    <property type="match status" value="1"/>
</dbReference>
<dbReference type="Gene3D" id="3.30.930.10">
    <property type="entry name" value="Bira Bifunctional Protein, Domain 2"/>
    <property type="match status" value="1"/>
</dbReference>
<dbReference type="Gene3D" id="3.30.1360.30">
    <property type="entry name" value="GAD-like domain"/>
    <property type="match status" value="1"/>
</dbReference>
<dbReference type="Gene3D" id="2.40.50.140">
    <property type="entry name" value="Nucleic acid-binding proteins"/>
    <property type="match status" value="1"/>
</dbReference>
<dbReference type="HAMAP" id="MF_00044">
    <property type="entry name" value="Asp_tRNA_synth_type1"/>
    <property type="match status" value="1"/>
</dbReference>
<dbReference type="InterPro" id="IPR004364">
    <property type="entry name" value="Aa-tRNA-synt_II"/>
</dbReference>
<dbReference type="InterPro" id="IPR006195">
    <property type="entry name" value="aa-tRNA-synth_II"/>
</dbReference>
<dbReference type="InterPro" id="IPR045864">
    <property type="entry name" value="aa-tRNA-synth_II/BPL/LPL"/>
</dbReference>
<dbReference type="InterPro" id="IPR004524">
    <property type="entry name" value="Asp-tRNA-ligase_1"/>
</dbReference>
<dbReference type="InterPro" id="IPR047089">
    <property type="entry name" value="Asp-tRNA-ligase_1_N"/>
</dbReference>
<dbReference type="InterPro" id="IPR002312">
    <property type="entry name" value="Asp/Asn-tRNA-synth_IIb"/>
</dbReference>
<dbReference type="InterPro" id="IPR047090">
    <property type="entry name" value="AspRS_core"/>
</dbReference>
<dbReference type="InterPro" id="IPR004115">
    <property type="entry name" value="GAD-like_sf"/>
</dbReference>
<dbReference type="InterPro" id="IPR029351">
    <property type="entry name" value="GAD_dom"/>
</dbReference>
<dbReference type="InterPro" id="IPR012340">
    <property type="entry name" value="NA-bd_OB-fold"/>
</dbReference>
<dbReference type="InterPro" id="IPR004365">
    <property type="entry name" value="NA-bd_OB_tRNA"/>
</dbReference>
<dbReference type="NCBIfam" id="TIGR00459">
    <property type="entry name" value="aspS_bact"/>
    <property type="match status" value="1"/>
</dbReference>
<dbReference type="NCBIfam" id="NF001750">
    <property type="entry name" value="PRK00476.1"/>
    <property type="match status" value="1"/>
</dbReference>
<dbReference type="PANTHER" id="PTHR22594:SF5">
    <property type="entry name" value="ASPARTATE--TRNA LIGASE, MITOCHONDRIAL"/>
    <property type="match status" value="1"/>
</dbReference>
<dbReference type="PANTHER" id="PTHR22594">
    <property type="entry name" value="ASPARTYL/LYSYL-TRNA SYNTHETASE"/>
    <property type="match status" value="1"/>
</dbReference>
<dbReference type="Pfam" id="PF02938">
    <property type="entry name" value="GAD"/>
    <property type="match status" value="1"/>
</dbReference>
<dbReference type="Pfam" id="PF00152">
    <property type="entry name" value="tRNA-synt_2"/>
    <property type="match status" value="1"/>
</dbReference>
<dbReference type="Pfam" id="PF01336">
    <property type="entry name" value="tRNA_anti-codon"/>
    <property type="match status" value="1"/>
</dbReference>
<dbReference type="PRINTS" id="PR01042">
    <property type="entry name" value="TRNASYNTHASP"/>
</dbReference>
<dbReference type="SUPFAM" id="SSF55681">
    <property type="entry name" value="Class II aaRS and biotin synthetases"/>
    <property type="match status" value="1"/>
</dbReference>
<dbReference type="SUPFAM" id="SSF55261">
    <property type="entry name" value="GAD domain-like"/>
    <property type="match status" value="1"/>
</dbReference>
<dbReference type="SUPFAM" id="SSF50249">
    <property type="entry name" value="Nucleic acid-binding proteins"/>
    <property type="match status" value="1"/>
</dbReference>
<dbReference type="PROSITE" id="PS50862">
    <property type="entry name" value="AA_TRNA_LIGASE_II"/>
    <property type="match status" value="1"/>
</dbReference>
<feature type="chain" id="PRO_1000091047" description="Aspartate--tRNA ligase">
    <location>
        <begin position="1"/>
        <end position="583"/>
    </location>
</feature>
<feature type="region of interest" description="Aspartate" evidence="1">
    <location>
        <begin position="193"/>
        <end position="196"/>
    </location>
</feature>
<feature type="binding site" evidence="1">
    <location>
        <position position="169"/>
    </location>
    <ligand>
        <name>L-aspartate</name>
        <dbReference type="ChEBI" id="CHEBI:29991"/>
    </ligand>
</feature>
<feature type="binding site" evidence="1">
    <location>
        <begin position="215"/>
        <end position="217"/>
    </location>
    <ligand>
        <name>ATP</name>
        <dbReference type="ChEBI" id="CHEBI:30616"/>
    </ligand>
</feature>
<feature type="binding site" evidence="1">
    <location>
        <position position="215"/>
    </location>
    <ligand>
        <name>L-aspartate</name>
        <dbReference type="ChEBI" id="CHEBI:29991"/>
    </ligand>
</feature>
<feature type="binding site" evidence="1">
    <location>
        <position position="224"/>
    </location>
    <ligand>
        <name>ATP</name>
        <dbReference type="ChEBI" id="CHEBI:30616"/>
    </ligand>
</feature>
<feature type="binding site" evidence="1">
    <location>
        <position position="443"/>
    </location>
    <ligand>
        <name>L-aspartate</name>
        <dbReference type="ChEBI" id="CHEBI:29991"/>
    </ligand>
</feature>
<feature type="binding site" evidence="1">
    <location>
        <position position="477"/>
    </location>
    <ligand>
        <name>ATP</name>
        <dbReference type="ChEBI" id="CHEBI:30616"/>
    </ligand>
</feature>
<feature type="binding site" evidence="1">
    <location>
        <position position="484"/>
    </location>
    <ligand>
        <name>L-aspartate</name>
        <dbReference type="ChEBI" id="CHEBI:29991"/>
    </ligand>
</feature>
<feature type="binding site" evidence="1">
    <location>
        <begin position="529"/>
        <end position="532"/>
    </location>
    <ligand>
        <name>ATP</name>
        <dbReference type="ChEBI" id="CHEBI:30616"/>
    </ligand>
</feature>
<accession>B4ST40</accession>